<reference key="1">
    <citation type="submission" date="2007-02" db="EMBL/GenBank/DDBJ databases">
        <title>Complete sequence of chromosome of Yersinia pestis Pestoides F.</title>
        <authorList>
            <consortium name="US DOE Joint Genome Institute"/>
            <person name="Copeland A."/>
            <person name="Lucas S."/>
            <person name="Lapidus A."/>
            <person name="Barry K."/>
            <person name="Detter J.C."/>
            <person name="Glavina del Rio T."/>
            <person name="Hammon N."/>
            <person name="Israni S."/>
            <person name="Dalin E."/>
            <person name="Tice H."/>
            <person name="Pitluck S."/>
            <person name="Di Bartolo G."/>
            <person name="Chain P."/>
            <person name="Malfatti S."/>
            <person name="Shin M."/>
            <person name="Vergez L."/>
            <person name="Schmutz J."/>
            <person name="Larimer F."/>
            <person name="Land M."/>
            <person name="Hauser L."/>
            <person name="Worsham P."/>
            <person name="Chu M."/>
            <person name="Bearden S."/>
            <person name="Garcia E."/>
            <person name="Richardson P."/>
        </authorList>
    </citation>
    <scope>NUCLEOTIDE SEQUENCE [LARGE SCALE GENOMIC DNA]</scope>
    <source>
        <strain>Pestoides F</strain>
    </source>
</reference>
<keyword id="KW-0131">Cell cycle</keyword>
<keyword id="KW-0132">Cell division</keyword>
<keyword id="KW-0574">Periplasm</keyword>
<keyword id="KW-0732">Signal</keyword>
<accession>A4TNS8</accession>
<comment type="function">
    <text evidence="1">Part of the Tol-Pal system, which plays a role in outer membrane invagination during cell division and is important for maintaining outer membrane integrity. TolB occupies a key intermediary position in the Tol-Pal system because it communicates directly with both membrane-embedded components, Pal in the outer membrane and TolA in the inner membrane.</text>
</comment>
<comment type="subunit">
    <text evidence="1">The Tol-Pal system is composed of five core proteins: the inner membrane proteins TolA, TolQ and TolR, the periplasmic protein TolB and the outer membrane protein Pal. They form a network linking the inner and outer membranes and the peptidoglycan layer.</text>
</comment>
<comment type="subcellular location">
    <subcellularLocation>
        <location evidence="1">Periplasm</location>
    </subcellularLocation>
</comment>
<comment type="similarity">
    <text evidence="1">Belongs to the TolB family.</text>
</comment>
<proteinExistence type="inferred from homology"/>
<gene>
    <name evidence="1" type="primary">tolB</name>
    <name type="ordered locus">YPDSF_2572</name>
</gene>
<name>TOLB_YERPP</name>
<feature type="signal peptide" evidence="1">
    <location>
        <begin position="1"/>
        <end position="21"/>
    </location>
</feature>
<feature type="chain" id="PRO_5000236934" description="Tol-Pal system protein TolB" evidence="1">
    <location>
        <begin position="22"/>
        <end position="430"/>
    </location>
</feature>
<evidence type="ECO:0000255" key="1">
    <source>
        <dbReference type="HAMAP-Rule" id="MF_00671"/>
    </source>
</evidence>
<sequence>MKQAFRVALGFLVLWASVLHAEVRIEITQGVDSARPIGVVPFKWMGPGTPPEEIGAIVGADLRNSGKFNPIDAARMPQQPSTAAEVTPAAWTALGIDAVVVGQVQPSADGSYVVSYQLVDTSGSAGSILAQNQYKVTKQWLRYSAHTVSDEVFEKLTGIKGAFRTRIAYVVKTNGGKFPHELRVSDYDGYNQFVVHRSPEPLMSPAWSPDGSKIAYVTFESGKSALVIQTLANGAIRQVASFPRHNGAPAFSPDGTKLAFALSKSGSLNLYVMDLASGQISQVTDGRSNNTEPSWFPDSQNLAYTSDQGGRPQVYKVNINGGVPQRITWEGSQNQNADVSPDGKFLVLVSSNGGAQHIAKQDLETGAVQVLTDTLLDETPSIAPNGTMVIYSSTQGLGSVLQLVSTDGRFKARLPATDGQVKFPAWSPYL</sequence>
<protein>
    <recommendedName>
        <fullName evidence="1">Tol-Pal system protein TolB</fullName>
    </recommendedName>
</protein>
<organism>
    <name type="scientific">Yersinia pestis (strain Pestoides F)</name>
    <dbReference type="NCBI Taxonomy" id="386656"/>
    <lineage>
        <taxon>Bacteria</taxon>
        <taxon>Pseudomonadati</taxon>
        <taxon>Pseudomonadota</taxon>
        <taxon>Gammaproteobacteria</taxon>
        <taxon>Enterobacterales</taxon>
        <taxon>Yersiniaceae</taxon>
        <taxon>Yersinia</taxon>
    </lineage>
</organism>
<dbReference type="EMBL" id="CP000668">
    <property type="protein sequence ID" value="ABP40940.1"/>
    <property type="molecule type" value="Genomic_DNA"/>
</dbReference>
<dbReference type="RefSeq" id="WP_002210738.1">
    <property type="nucleotide sequence ID" value="NZ_CP009715.1"/>
</dbReference>
<dbReference type="SMR" id="A4TNS8"/>
<dbReference type="GeneID" id="57977261"/>
<dbReference type="KEGG" id="ypp:YPDSF_2572"/>
<dbReference type="PATRIC" id="fig|386656.14.peg.4092"/>
<dbReference type="GO" id="GO:0042597">
    <property type="term" value="C:periplasmic space"/>
    <property type="evidence" value="ECO:0007669"/>
    <property type="project" value="UniProtKB-SubCell"/>
</dbReference>
<dbReference type="GO" id="GO:0051301">
    <property type="term" value="P:cell division"/>
    <property type="evidence" value="ECO:0007669"/>
    <property type="project" value="UniProtKB-UniRule"/>
</dbReference>
<dbReference type="GO" id="GO:0017038">
    <property type="term" value="P:protein import"/>
    <property type="evidence" value="ECO:0007669"/>
    <property type="project" value="InterPro"/>
</dbReference>
<dbReference type="FunFam" id="2.120.10.30:FF:000022">
    <property type="entry name" value="Tol-Pal system protein TolB"/>
    <property type="match status" value="1"/>
</dbReference>
<dbReference type="Gene3D" id="2.120.10.30">
    <property type="entry name" value="TolB, C-terminal domain"/>
    <property type="match status" value="1"/>
</dbReference>
<dbReference type="Gene3D" id="3.40.50.10070">
    <property type="entry name" value="TolB, N-terminal domain"/>
    <property type="match status" value="1"/>
</dbReference>
<dbReference type="HAMAP" id="MF_00671">
    <property type="entry name" value="TolB"/>
    <property type="match status" value="1"/>
</dbReference>
<dbReference type="InterPro" id="IPR011042">
    <property type="entry name" value="6-blade_b-propeller_TolB-like"/>
</dbReference>
<dbReference type="InterPro" id="IPR011659">
    <property type="entry name" value="PD40"/>
</dbReference>
<dbReference type="InterPro" id="IPR014167">
    <property type="entry name" value="Tol-Pal_TolB"/>
</dbReference>
<dbReference type="InterPro" id="IPR007195">
    <property type="entry name" value="TolB_N"/>
</dbReference>
<dbReference type="NCBIfam" id="TIGR02800">
    <property type="entry name" value="propeller_TolB"/>
    <property type="match status" value="1"/>
</dbReference>
<dbReference type="PANTHER" id="PTHR36842:SF1">
    <property type="entry name" value="PROTEIN TOLB"/>
    <property type="match status" value="1"/>
</dbReference>
<dbReference type="PANTHER" id="PTHR36842">
    <property type="entry name" value="PROTEIN TOLB HOMOLOG"/>
    <property type="match status" value="1"/>
</dbReference>
<dbReference type="Pfam" id="PF07676">
    <property type="entry name" value="PD40"/>
    <property type="match status" value="4"/>
</dbReference>
<dbReference type="Pfam" id="PF04052">
    <property type="entry name" value="TolB_N"/>
    <property type="match status" value="1"/>
</dbReference>
<dbReference type="SUPFAM" id="SSF52964">
    <property type="entry name" value="TolB, N-terminal domain"/>
    <property type="match status" value="1"/>
</dbReference>
<dbReference type="SUPFAM" id="SSF69304">
    <property type="entry name" value="Tricorn protease N-terminal domain"/>
    <property type="match status" value="1"/>
</dbReference>